<feature type="chain" id="PRO_0000132055" description="Large ribosomal subunit protein eL14">
    <location>
        <begin position="1"/>
        <end position="96"/>
    </location>
</feature>
<organism>
    <name type="scientific">Sulfolobus acidocaldarius (strain ATCC 33909 / DSM 639 / JCM 8929 / NBRC 15157 / NCIMB 11770)</name>
    <dbReference type="NCBI Taxonomy" id="330779"/>
    <lineage>
        <taxon>Archaea</taxon>
        <taxon>Thermoproteota</taxon>
        <taxon>Thermoprotei</taxon>
        <taxon>Sulfolobales</taxon>
        <taxon>Sulfolobaceae</taxon>
        <taxon>Sulfolobus</taxon>
    </lineage>
</organism>
<reference key="1">
    <citation type="journal article" date="2005" name="J. Bacteriol.">
        <title>The genome of Sulfolobus acidocaldarius, a model organism of the Crenarchaeota.</title>
        <authorList>
            <person name="Chen L."/>
            <person name="Bruegger K."/>
            <person name="Skovgaard M."/>
            <person name="Redder P."/>
            <person name="She Q."/>
            <person name="Torarinsson E."/>
            <person name="Greve B."/>
            <person name="Awayez M."/>
            <person name="Zibat A."/>
            <person name="Klenk H.-P."/>
            <person name="Garrett R.A."/>
        </authorList>
    </citation>
    <scope>NUCLEOTIDE SEQUENCE [LARGE SCALE GENOMIC DNA]</scope>
    <source>
        <strain>ATCC 33909 / DSM 639 / JCM 8929 / NBRC 15157 / NCIMB 11770</strain>
    </source>
</reference>
<keyword id="KW-0002">3D-structure</keyword>
<keyword id="KW-1185">Reference proteome</keyword>
<keyword id="KW-0687">Ribonucleoprotein</keyword>
<keyword id="KW-0689">Ribosomal protein</keyword>
<protein>
    <recommendedName>
        <fullName evidence="1">Large ribosomal subunit protein eL14</fullName>
    </recommendedName>
    <alternativeName>
        <fullName evidence="2">50S ribosomal protein L14e</fullName>
    </alternativeName>
</protein>
<evidence type="ECO:0000255" key="1">
    <source>
        <dbReference type="HAMAP-Rule" id="MF_00721"/>
    </source>
</evidence>
<evidence type="ECO:0000305" key="2"/>
<gene>
    <name evidence="1" type="primary">rpl14e</name>
    <name type="ordered locus">Saci_0813</name>
</gene>
<name>RL14E_SULAC</name>
<sequence length="96" mass="10646">MPAIEIGRICVKTRGREAGKKCVIVDIIDSNFVLVTGPKEINGVKRRRVNILHIEPTDKKVEINKGATDQEVKQAIEQSGLTDFIKEAVKPKIPVI</sequence>
<accession>Q4JAJ9</accession>
<comment type="similarity">
    <text evidence="1">Belongs to the eukaryotic ribosomal protein eL14 family.</text>
</comment>
<proteinExistence type="evidence at protein level"/>
<dbReference type="EMBL" id="CP000077">
    <property type="protein sequence ID" value="AAY80180.1"/>
    <property type="molecule type" value="Genomic_DNA"/>
</dbReference>
<dbReference type="RefSeq" id="WP_011277682.1">
    <property type="nucleotide sequence ID" value="NC_007181.1"/>
</dbReference>
<dbReference type="PDB" id="8HKU">
    <property type="method" value="EM"/>
    <property type="resolution" value="2.72 A"/>
    <property type="chains" value="L141/L142=3-88"/>
</dbReference>
<dbReference type="PDB" id="8HKV">
    <property type="method" value="EM"/>
    <property type="resolution" value="4.94 A"/>
    <property type="chains" value="L141/L142=3-88"/>
</dbReference>
<dbReference type="PDB" id="8HKY">
    <property type="method" value="EM"/>
    <property type="resolution" value="4.45 A"/>
    <property type="chains" value="L141/L142=3-88"/>
</dbReference>
<dbReference type="PDB" id="8HKZ">
    <property type="method" value="EM"/>
    <property type="resolution" value="4.78 A"/>
    <property type="chains" value="L141/L142=3-88"/>
</dbReference>
<dbReference type="PDB" id="8HL1">
    <property type="method" value="EM"/>
    <property type="resolution" value="3.93 A"/>
    <property type="chains" value="L141/L142=3-88"/>
</dbReference>
<dbReference type="PDB" id="8HL2">
    <property type="method" value="EM"/>
    <property type="resolution" value="4.10 A"/>
    <property type="chains" value="L141/L142=3-88"/>
</dbReference>
<dbReference type="PDB" id="8HL3">
    <property type="method" value="EM"/>
    <property type="resolution" value="4.80 A"/>
    <property type="chains" value="L141/L142=3-88"/>
</dbReference>
<dbReference type="PDB" id="8HL4">
    <property type="method" value="EM"/>
    <property type="resolution" value="4.62 A"/>
    <property type="chains" value="L141/L142=3-88"/>
</dbReference>
<dbReference type="PDB" id="8HL5">
    <property type="method" value="EM"/>
    <property type="resolution" value="5.72 A"/>
    <property type="chains" value="L141/L142=3-88"/>
</dbReference>
<dbReference type="PDBsum" id="8HKU"/>
<dbReference type="PDBsum" id="8HKV"/>
<dbReference type="PDBsum" id="8HKY"/>
<dbReference type="PDBsum" id="8HKZ"/>
<dbReference type="PDBsum" id="8HL1"/>
<dbReference type="PDBsum" id="8HL2"/>
<dbReference type="PDBsum" id="8HL3"/>
<dbReference type="PDBsum" id="8HL4"/>
<dbReference type="PDBsum" id="8HL5"/>
<dbReference type="EMDB" id="EMD-34860"/>
<dbReference type="EMDB" id="EMD-34861"/>
<dbReference type="EMDB" id="EMD-34863"/>
<dbReference type="EMDB" id="EMD-34864"/>
<dbReference type="EMDB" id="EMD-34866"/>
<dbReference type="EMDB" id="EMD-34867"/>
<dbReference type="EMDB" id="EMD-34868"/>
<dbReference type="EMDB" id="EMD-34869"/>
<dbReference type="EMDB" id="EMD-34870"/>
<dbReference type="SMR" id="Q4JAJ9"/>
<dbReference type="STRING" id="330779.Saci_0813"/>
<dbReference type="GeneID" id="14551326"/>
<dbReference type="KEGG" id="sai:Saci_0813"/>
<dbReference type="PATRIC" id="fig|330779.12.peg.777"/>
<dbReference type="eggNOG" id="arCOG04167">
    <property type="taxonomic scope" value="Archaea"/>
</dbReference>
<dbReference type="HOGENOM" id="CLU_183474_0_0_2"/>
<dbReference type="Proteomes" id="UP000001018">
    <property type="component" value="Chromosome"/>
</dbReference>
<dbReference type="GO" id="GO:0022625">
    <property type="term" value="C:cytosolic large ribosomal subunit"/>
    <property type="evidence" value="ECO:0007669"/>
    <property type="project" value="TreeGrafter"/>
</dbReference>
<dbReference type="GO" id="GO:0003723">
    <property type="term" value="F:RNA binding"/>
    <property type="evidence" value="ECO:0007669"/>
    <property type="project" value="InterPro"/>
</dbReference>
<dbReference type="GO" id="GO:0003735">
    <property type="term" value="F:structural constituent of ribosome"/>
    <property type="evidence" value="ECO:0007669"/>
    <property type="project" value="InterPro"/>
</dbReference>
<dbReference type="GO" id="GO:0042273">
    <property type="term" value="P:ribosomal large subunit biogenesis"/>
    <property type="evidence" value="ECO:0007669"/>
    <property type="project" value="TreeGrafter"/>
</dbReference>
<dbReference type="GO" id="GO:0006412">
    <property type="term" value="P:translation"/>
    <property type="evidence" value="ECO:0007669"/>
    <property type="project" value="UniProtKB-UniRule"/>
</dbReference>
<dbReference type="CDD" id="cd23702">
    <property type="entry name" value="eL14"/>
    <property type="match status" value="1"/>
</dbReference>
<dbReference type="FunFam" id="2.30.30.30:FF:000045">
    <property type="entry name" value="50S ribosomal protein L14e"/>
    <property type="match status" value="1"/>
</dbReference>
<dbReference type="Gene3D" id="2.30.30.30">
    <property type="match status" value="1"/>
</dbReference>
<dbReference type="HAMAP" id="MF_00721">
    <property type="entry name" value="Ribosomal_eL14"/>
    <property type="match status" value="1"/>
</dbReference>
<dbReference type="InterPro" id="IPR005824">
    <property type="entry name" value="KOW"/>
</dbReference>
<dbReference type="InterPro" id="IPR014722">
    <property type="entry name" value="Rib_uL2_dom2"/>
</dbReference>
<dbReference type="InterPro" id="IPR039660">
    <property type="entry name" value="Ribosomal_eL14"/>
</dbReference>
<dbReference type="InterPro" id="IPR023651">
    <property type="entry name" value="Ribosomal_eL14_arc"/>
</dbReference>
<dbReference type="InterPro" id="IPR008991">
    <property type="entry name" value="Translation_prot_SH3-like_sf"/>
</dbReference>
<dbReference type="NCBIfam" id="NF003320">
    <property type="entry name" value="PRK04333.1"/>
    <property type="match status" value="1"/>
</dbReference>
<dbReference type="PANTHER" id="PTHR11127">
    <property type="entry name" value="60S RIBOSOMAL PROTEIN L14"/>
    <property type="match status" value="1"/>
</dbReference>
<dbReference type="PANTHER" id="PTHR11127:SF2">
    <property type="entry name" value="LARGE RIBOSOMAL SUBUNIT PROTEIN EL14"/>
    <property type="match status" value="1"/>
</dbReference>
<dbReference type="Pfam" id="PF00467">
    <property type="entry name" value="KOW"/>
    <property type="match status" value="1"/>
</dbReference>
<dbReference type="SUPFAM" id="SSF50104">
    <property type="entry name" value="Translation proteins SH3-like domain"/>
    <property type="match status" value="1"/>
</dbReference>